<dbReference type="EMBL" id="Z46794">
    <property type="protein sequence ID" value="CAA86776.1"/>
    <property type="status" value="ALT_SEQ"/>
    <property type="molecule type" value="Genomic_DNA"/>
</dbReference>
<dbReference type="PIR" id="T23977">
    <property type="entry name" value="T23977"/>
</dbReference>
<dbReference type="RefSeq" id="NP_496326.2">
    <property type="nucleotide sequence ID" value="NM_063925.4"/>
</dbReference>
<dbReference type="SMR" id="Q09602"/>
<dbReference type="BioGRID" id="52329">
    <property type="interactions" value="1"/>
</dbReference>
<dbReference type="IntAct" id="Q09602">
    <property type="interactions" value="1"/>
</dbReference>
<dbReference type="STRING" id="6239.R06F6.6.1"/>
<dbReference type="PaxDb" id="6239-R06F6.6"/>
<dbReference type="EnsemblMetazoa" id="R06F6.6.1">
    <property type="protein sequence ID" value="R06F6.6.1"/>
    <property type="gene ID" value="WBGene00011069"/>
</dbReference>
<dbReference type="GeneID" id="187642"/>
<dbReference type="KEGG" id="cel:CELE_R06F6.6"/>
<dbReference type="UCSC" id="R06F6.6">
    <property type="organism name" value="c. elegans"/>
</dbReference>
<dbReference type="AGR" id="WB:WBGene00011069"/>
<dbReference type="CTD" id="187642"/>
<dbReference type="WormBase" id="R06F6.6">
    <property type="protein sequence ID" value="CE51240"/>
    <property type="gene ID" value="WBGene00011069"/>
    <property type="gene designation" value="ceh-62"/>
</dbReference>
<dbReference type="eggNOG" id="KOG0489">
    <property type="taxonomic scope" value="Eukaryota"/>
</dbReference>
<dbReference type="GeneTree" id="ENSGT00940000172642"/>
<dbReference type="HOGENOM" id="CLU_660959_0_0_1"/>
<dbReference type="InParanoid" id="Q09602"/>
<dbReference type="OMA" id="HPYTRPI"/>
<dbReference type="OrthoDB" id="6159439at2759"/>
<dbReference type="PRO" id="PR:Q09602"/>
<dbReference type="Proteomes" id="UP000001940">
    <property type="component" value="Chromosome II"/>
</dbReference>
<dbReference type="Bgee" id="WBGene00011069">
    <property type="expression patterns" value="Expressed in pharyngeal muscle cell (C elegans) and 3 other cell types or tissues"/>
</dbReference>
<dbReference type="GO" id="GO:0005634">
    <property type="term" value="C:nucleus"/>
    <property type="evidence" value="ECO:0007669"/>
    <property type="project" value="UniProtKB-SubCell"/>
</dbReference>
<dbReference type="GO" id="GO:0003677">
    <property type="term" value="F:DNA binding"/>
    <property type="evidence" value="ECO:0007669"/>
    <property type="project" value="UniProtKB-KW"/>
</dbReference>
<dbReference type="GO" id="GO:0000981">
    <property type="term" value="F:DNA-binding transcription factor activity, RNA polymerase II-specific"/>
    <property type="evidence" value="ECO:0007669"/>
    <property type="project" value="InterPro"/>
</dbReference>
<dbReference type="CDD" id="cd00086">
    <property type="entry name" value="homeodomain"/>
    <property type="match status" value="1"/>
</dbReference>
<dbReference type="Gene3D" id="1.10.10.60">
    <property type="entry name" value="Homeodomain-like"/>
    <property type="match status" value="1"/>
</dbReference>
<dbReference type="InterPro" id="IPR001356">
    <property type="entry name" value="HD"/>
</dbReference>
<dbReference type="InterPro" id="IPR017970">
    <property type="entry name" value="Homeobox_CS"/>
</dbReference>
<dbReference type="InterPro" id="IPR050848">
    <property type="entry name" value="Homeobox_TF"/>
</dbReference>
<dbReference type="InterPro" id="IPR009057">
    <property type="entry name" value="Homeodomain-like_sf"/>
</dbReference>
<dbReference type="PANTHER" id="PTHR24333">
    <property type="entry name" value="HOMEO BOX HB9 LIKE A-RELATED"/>
    <property type="match status" value="1"/>
</dbReference>
<dbReference type="PANTHER" id="PTHR24333:SF8">
    <property type="entry name" value="HOMEOBOX PROTEIN CEH-62"/>
    <property type="match status" value="1"/>
</dbReference>
<dbReference type="Pfam" id="PF00046">
    <property type="entry name" value="Homeodomain"/>
    <property type="match status" value="1"/>
</dbReference>
<dbReference type="SMART" id="SM00389">
    <property type="entry name" value="HOX"/>
    <property type="match status" value="1"/>
</dbReference>
<dbReference type="SUPFAM" id="SSF46689">
    <property type="entry name" value="Homeodomain-like"/>
    <property type="match status" value="1"/>
</dbReference>
<dbReference type="PROSITE" id="PS00027">
    <property type="entry name" value="HOMEOBOX_1"/>
    <property type="match status" value="1"/>
</dbReference>
<dbReference type="PROSITE" id="PS50071">
    <property type="entry name" value="HOMEOBOX_2"/>
    <property type="match status" value="1"/>
</dbReference>
<reference key="1">
    <citation type="journal article" date="1998" name="Science">
        <title>Genome sequence of the nematode C. elegans: a platform for investigating biology.</title>
        <authorList>
            <consortium name="The C. elegans sequencing consortium"/>
        </authorList>
    </citation>
    <scope>NUCLEOTIDE SEQUENCE [LARGE SCALE GENOMIC DNA]</scope>
    <source>
        <strain>Bristol N2</strain>
    </source>
</reference>
<keyword id="KW-0238">DNA-binding</keyword>
<keyword id="KW-0371">Homeobox</keyword>
<keyword id="KW-0539">Nucleus</keyword>
<keyword id="KW-1185">Reference proteome</keyword>
<name>CEH62_CAEEL</name>
<protein>
    <recommendedName>
        <fullName evidence="4">Homeobox protein ceh-62</fullName>
    </recommendedName>
</protein>
<proteinExistence type="inferred from homology"/>
<gene>
    <name evidence="4" type="primary">ceh-62</name>
    <name evidence="4" type="ORF">R06F6.6</name>
</gene>
<comment type="subcellular location">
    <subcellularLocation>
        <location evidence="1">Nucleus</location>
    </subcellularLocation>
</comment>
<comment type="sequence caution" evidence="3">
    <conflict type="erroneous gene model prediction">
        <sequence resource="EMBL-CDS" id="CAA86776"/>
    </conflict>
</comment>
<accession>Q09602</accession>
<organism>
    <name type="scientific">Caenorhabditis elegans</name>
    <dbReference type="NCBI Taxonomy" id="6239"/>
    <lineage>
        <taxon>Eukaryota</taxon>
        <taxon>Metazoa</taxon>
        <taxon>Ecdysozoa</taxon>
        <taxon>Nematoda</taxon>
        <taxon>Chromadorea</taxon>
        <taxon>Rhabditida</taxon>
        <taxon>Rhabditina</taxon>
        <taxon>Rhabditomorpha</taxon>
        <taxon>Rhabditoidea</taxon>
        <taxon>Rhabditidae</taxon>
        <taxon>Peloderinae</taxon>
        <taxon>Caenorhabditis</taxon>
    </lineage>
</organism>
<feature type="chain" id="PRO_0000049399" description="Homeobox protein ceh-62" evidence="3">
    <location>
        <begin position="1"/>
        <end position="416"/>
    </location>
</feature>
<feature type="DNA-binding region" description="Homeobox" evidence="1">
    <location>
        <begin position="130"/>
        <end position="189"/>
    </location>
</feature>
<feature type="region of interest" description="Disordered" evidence="2">
    <location>
        <begin position="103"/>
        <end position="144"/>
    </location>
</feature>
<feature type="region of interest" description="Disordered" evidence="2">
    <location>
        <begin position="178"/>
        <end position="247"/>
    </location>
</feature>
<feature type="compositionally biased region" description="Low complexity" evidence="2">
    <location>
        <begin position="103"/>
        <end position="113"/>
    </location>
</feature>
<feature type="compositionally biased region" description="Polar residues" evidence="2">
    <location>
        <begin position="118"/>
        <end position="127"/>
    </location>
</feature>
<feature type="compositionally biased region" description="Low complexity" evidence="2">
    <location>
        <begin position="193"/>
        <end position="218"/>
    </location>
</feature>
<feature type="compositionally biased region" description="Polar residues" evidence="2">
    <location>
        <begin position="219"/>
        <end position="240"/>
    </location>
</feature>
<evidence type="ECO:0000255" key="1">
    <source>
        <dbReference type="PROSITE-ProRule" id="PRU00108"/>
    </source>
</evidence>
<evidence type="ECO:0000256" key="2">
    <source>
        <dbReference type="SAM" id="MobiDB-lite"/>
    </source>
</evidence>
<evidence type="ECO:0000305" key="3"/>
<evidence type="ECO:0000312" key="4">
    <source>
        <dbReference type="WormBase" id="R06F6.6"/>
    </source>
</evidence>
<sequence>MHRKGGQTLRLYTHFLLHLSPHHHSFLDSIWQRKMVHPSSAFHPYTRPIPTTSGHDLPVDDSLRLLLSAEALIALAQLQDASKILPSYEPVKDFSPQLLPAMTPTPIIATPSIPEQPQPLQSPSAPNEKSRRKRTTFSPEQATRLEAEYIGDSYMAREKRHLLAQSLKLSENQVKTWFQNRRAKDKRDRKSENASNHTSNSRRSSPSRKSSSDSTPTPTQATQFDMPTQIQTASPPTTADSAIFPPTSPESIIQKIEQFPSNQILPNFDILQTYLQSLSSSQIPLQFVPSTPPLFDPNMLQLYHVIFEFSQSETCSVSFQRNSASNMRSLLIFVFFATIFAVDAQYDSADSSQSEDLPDIAPESVSSEEIIEVDVNIEGSGSGDGPIIDQVHMFGILPGPGDIRKKRGILEILGRK</sequence>